<organism>
    <name type="scientific">Citrifermentans bemidjiense (strain ATCC BAA-1014 / DSM 16622 / JCM 12645 / Bem)</name>
    <name type="common">Geobacter bemidjiensis</name>
    <dbReference type="NCBI Taxonomy" id="404380"/>
    <lineage>
        <taxon>Bacteria</taxon>
        <taxon>Pseudomonadati</taxon>
        <taxon>Thermodesulfobacteriota</taxon>
        <taxon>Desulfuromonadia</taxon>
        <taxon>Geobacterales</taxon>
        <taxon>Geobacteraceae</taxon>
        <taxon>Citrifermentans</taxon>
    </lineage>
</organism>
<comment type="function">
    <text evidence="1">Catalyzes the reversible transfer of the terminal phosphate group between ATP and AMP. Plays an important role in cellular energy homeostasis and in adenine nucleotide metabolism.</text>
</comment>
<comment type="catalytic activity">
    <reaction evidence="1">
        <text>AMP + ATP = 2 ADP</text>
        <dbReference type="Rhea" id="RHEA:12973"/>
        <dbReference type="ChEBI" id="CHEBI:30616"/>
        <dbReference type="ChEBI" id="CHEBI:456215"/>
        <dbReference type="ChEBI" id="CHEBI:456216"/>
        <dbReference type="EC" id="2.7.4.3"/>
    </reaction>
</comment>
<comment type="pathway">
    <text evidence="1">Purine metabolism; AMP biosynthesis via salvage pathway; AMP from ADP: step 1/1.</text>
</comment>
<comment type="subunit">
    <text evidence="1">Monomer.</text>
</comment>
<comment type="subcellular location">
    <subcellularLocation>
        <location evidence="1">Cytoplasm</location>
    </subcellularLocation>
</comment>
<comment type="domain">
    <text evidence="1">Consists of three domains, a large central CORE domain and two small peripheral domains, NMPbind and LID, which undergo movements during catalysis. The LID domain closes over the site of phosphoryl transfer upon ATP binding. Assembling and dissambling the active center during each catalytic cycle provides an effective means to prevent ATP hydrolysis. Some bacteria have evolved a zinc-coordinating structure that stabilizes the LID domain.</text>
</comment>
<comment type="similarity">
    <text evidence="1">Belongs to the adenylate kinase family.</text>
</comment>
<dbReference type="EC" id="2.7.4.3" evidence="1"/>
<dbReference type="EMBL" id="CP001124">
    <property type="protein sequence ID" value="ACH37975.1"/>
    <property type="molecule type" value="Genomic_DNA"/>
</dbReference>
<dbReference type="RefSeq" id="WP_012529387.1">
    <property type="nucleotide sequence ID" value="NC_011146.1"/>
</dbReference>
<dbReference type="SMR" id="B5EFS1"/>
<dbReference type="STRING" id="404380.Gbem_0954"/>
<dbReference type="KEGG" id="gbm:Gbem_0954"/>
<dbReference type="eggNOG" id="COG0563">
    <property type="taxonomic scope" value="Bacteria"/>
</dbReference>
<dbReference type="HOGENOM" id="CLU_032354_1_2_7"/>
<dbReference type="OrthoDB" id="9805030at2"/>
<dbReference type="UniPathway" id="UPA00588">
    <property type="reaction ID" value="UER00649"/>
</dbReference>
<dbReference type="Proteomes" id="UP000008825">
    <property type="component" value="Chromosome"/>
</dbReference>
<dbReference type="GO" id="GO:0005737">
    <property type="term" value="C:cytoplasm"/>
    <property type="evidence" value="ECO:0007669"/>
    <property type="project" value="UniProtKB-SubCell"/>
</dbReference>
<dbReference type="GO" id="GO:0004017">
    <property type="term" value="F:adenylate kinase activity"/>
    <property type="evidence" value="ECO:0007669"/>
    <property type="project" value="UniProtKB-UniRule"/>
</dbReference>
<dbReference type="GO" id="GO:0005524">
    <property type="term" value="F:ATP binding"/>
    <property type="evidence" value="ECO:0007669"/>
    <property type="project" value="UniProtKB-UniRule"/>
</dbReference>
<dbReference type="GO" id="GO:0008270">
    <property type="term" value="F:zinc ion binding"/>
    <property type="evidence" value="ECO:0007669"/>
    <property type="project" value="UniProtKB-UniRule"/>
</dbReference>
<dbReference type="GO" id="GO:0044209">
    <property type="term" value="P:AMP salvage"/>
    <property type="evidence" value="ECO:0007669"/>
    <property type="project" value="UniProtKB-UniRule"/>
</dbReference>
<dbReference type="CDD" id="cd01428">
    <property type="entry name" value="ADK"/>
    <property type="match status" value="1"/>
</dbReference>
<dbReference type="FunFam" id="3.40.50.300:FF:000106">
    <property type="entry name" value="Adenylate kinase mitochondrial"/>
    <property type="match status" value="1"/>
</dbReference>
<dbReference type="Gene3D" id="3.40.50.300">
    <property type="entry name" value="P-loop containing nucleotide triphosphate hydrolases"/>
    <property type="match status" value="1"/>
</dbReference>
<dbReference type="HAMAP" id="MF_00235">
    <property type="entry name" value="Adenylate_kinase_Adk"/>
    <property type="match status" value="1"/>
</dbReference>
<dbReference type="InterPro" id="IPR006259">
    <property type="entry name" value="Adenyl_kin_sub"/>
</dbReference>
<dbReference type="InterPro" id="IPR000850">
    <property type="entry name" value="Adenylat/UMP-CMP_kin"/>
</dbReference>
<dbReference type="InterPro" id="IPR033690">
    <property type="entry name" value="Adenylat_kinase_CS"/>
</dbReference>
<dbReference type="InterPro" id="IPR007862">
    <property type="entry name" value="Adenylate_kinase_lid-dom"/>
</dbReference>
<dbReference type="InterPro" id="IPR027417">
    <property type="entry name" value="P-loop_NTPase"/>
</dbReference>
<dbReference type="NCBIfam" id="TIGR01351">
    <property type="entry name" value="adk"/>
    <property type="match status" value="1"/>
</dbReference>
<dbReference type="NCBIfam" id="NF001380">
    <property type="entry name" value="PRK00279.1-2"/>
    <property type="match status" value="1"/>
</dbReference>
<dbReference type="NCBIfam" id="NF001381">
    <property type="entry name" value="PRK00279.1-3"/>
    <property type="match status" value="1"/>
</dbReference>
<dbReference type="NCBIfam" id="NF011100">
    <property type="entry name" value="PRK14527.1"/>
    <property type="match status" value="1"/>
</dbReference>
<dbReference type="PANTHER" id="PTHR23359">
    <property type="entry name" value="NUCLEOTIDE KINASE"/>
    <property type="match status" value="1"/>
</dbReference>
<dbReference type="Pfam" id="PF00406">
    <property type="entry name" value="ADK"/>
    <property type="match status" value="1"/>
</dbReference>
<dbReference type="Pfam" id="PF05191">
    <property type="entry name" value="ADK_lid"/>
    <property type="match status" value="1"/>
</dbReference>
<dbReference type="PRINTS" id="PR00094">
    <property type="entry name" value="ADENYLTKNASE"/>
</dbReference>
<dbReference type="SUPFAM" id="SSF52540">
    <property type="entry name" value="P-loop containing nucleoside triphosphate hydrolases"/>
    <property type="match status" value="1"/>
</dbReference>
<dbReference type="PROSITE" id="PS00113">
    <property type="entry name" value="ADENYLATE_KINASE"/>
    <property type="match status" value="1"/>
</dbReference>
<gene>
    <name evidence="1" type="primary">adk</name>
    <name type="ordered locus">Gbem_0954</name>
</gene>
<keyword id="KW-0067">ATP-binding</keyword>
<keyword id="KW-0963">Cytoplasm</keyword>
<keyword id="KW-0418">Kinase</keyword>
<keyword id="KW-0479">Metal-binding</keyword>
<keyword id="KW-0545">Nucleotide biosynthesis</keyword>
<keyword id="KW-0547">Nucleotide-binding</keyword>
<keyword id="KW-1185">Reference proteome</keyword>
<keyword id="KW-0808">Transferase</keyword>
<keyword id="KW-0862">Zinc</keyword>
<name>KAD_CITBB</name>
<feature type="chain" id="PRO_1000100566" description="Adenylate kinase">
    <location>
        <begin position="1"/>
        <end position="214"/>
    </location>
</feature>
<feature type="region of interest" description="NMP" evidence="1">
    <location>
        <begin position="30"/>
        <end position="59"/>
    </location>
</feature>
<feature type="region of interest" description="LID" evidence="1">
    <location>
        <begin position="126"/>
        <end position="163"/>
    </location>
</feature>
<feature type="binding site" evidence="1">
    <location>
        <begin position="10"/>
        <end position="15"/>
    </location>
    <ligand>
        <name>ATP</name>
        <dbReference type="ChEBI" id="CHEBI:30616"/>
    </ligand>
</feature>
<feature type="binding site" evidence="1">
    <location>
        <position position="31"/>
    </location>
    <ligand>
        <name>AMP</name>
        <dbReference type="ChEBI" id="CHEBI:456215"/>
    </ligand>
</feature>
<feature type="binding site" evidence="1">
    <location>
        <position position="36"/>
    </location>
    <ligand>
        <name>AMP</name>
        <dbReference type="ChEBI" id="CHEBI:456215"/>
    </ligand>
</feature>
<feature type="binding site" evidence="1">
    <location>
        <begin position="57"/>
        <end position="59"/>
    </location>
    <ligand>
        <name>AMP</name>
        <dbReference type="ChEBI" id="CHEBI:456215"/>
    </ligand>
</feature>
<feature type="binding site" evidence="1">
    <location>
        <begin position="85"/>
        <end position="88"/>
    </location>
    <ligand>
        <name>AMP</name>
        <dbReference type="ChEBI" id="CHEBI:456215"/>
    </ligand>
</feature>
<feature type="binding site" evidence="1">
    <location>
        <position position="92"/>
    </location>
    <ligand>
        <name>AMP</name>
        <dbReference type="ChEBI" id="CHEBI:456215"/>
    </ligand>
</feature>
<feature type="binding site" evidence="1">
    <location>
        <position position="127"/>
    </location>
    <ligand>
        <name>ATP</name>
        <dbReference type="ChEBI" id="CHEBI:30616"/>
    </ligand>
</feature>
<feature type="binding site" evidence="1">
    <location>
        <position position="130"/>
    </location>
    <ligand>
        <name>Zn(2+)</name>
        <dbReference type="ChEBI" id="CHEBI:29105"/>
        <note>structural</note>
    </ligand>
</feature>
<feature type="binding site" evidence="1">
    <location>
        <position position="133"/>
    </location>
    <ligand>
        <name>Zn(2+)</name>
        <dbReference type="ChEBI" id="CHEBI:29105"/>
        <note>structural</note>
    </ligand>
</feature>
<feature type="binding site" evidence="1">
    <location>
        <position position="150"/>
    </location>
    <ligand>
        <name>Zn(2+)</name>
        <dbReference type="ChEBI" id="CHEBI:29105"/>
        <note>structural</note>
    </ligand>
</feature>
<feature type="binding site" evidence="1">
    <location>
        <position position="153"/>
    </location>
    <ligand>
        <name>Zn(2+)</name>
        <dbReference type="ChEBI" id="CHEBI:29105"/>
        <note>structural</note>
    </ligand>
</feature>
<feature type="binding site" evidence="1">
    <location>
        <position position="160"/>
    </location>
    <ligand>
        <name>AMP</name>
        <dbReference type="ChEBI" id="CHEBI:456215"/>
    </ligand>
</feature>
<feature type="binding site" evidence="1">
    <location>
        <position position="171"/>
    </location>
    <ligand>
        <name>AMP</name>
        <dbReference type="ChEBI" id="CHEBI:456215"/>
    </ligand>
</feature>
<feature type="binding site" evidence="1">
    <location>
        <position position="199"/>
    </location>
    <ligand>
        <name>ATP</name>
        <dbReference type="ChEBI" id="CHEBI:30616"/>
    </ligand>
</feature>
<accession>B5EFS1</accession>
<proteinExistence type="inferred from homology"/>
<evidence type="ECO:0000255" key="1">
    <source>
        <dbReference type="HAMAP-Rule" id="MF_00235"/>
    </source>
</evidence>
<sequence>MNLILLGPPGVGKGTQAKLLIDRFGIPQISTGDILRAAVKELTPMGAKAKGYMDSGALVPDEVVIGIVEERLAQADCQKGFILDGFPRTVPQADALGQVLSGMGKSIDHVVSLSVDKGELLKRLTGRRACANCGAGYHVDFAPSKVAGVCDACSGQLVQREDDKEETILNRLAVYEAQTAPLIAYYQAAGLLRSVDGLGTVEGVQSGILAAIRA</sequence>
<reference key="1">
    <citation type="submission" date="2008-07" db="EMBL/GenBank/DDBJ databases">
        <title>Complete sequence of Geobacter bemidjiensis BEM.</title>
        <authorList>
            <consortium name="US DOE Joint Genome Institute"/>
            <person name="Lucas S."/>
            <person name="Copeland A."/>
            <person name="Lapidus A."/>
            <person name="Glavina del Rio T."/>
            <person name="Dalin E."/>
            <person name="Tice H."/>
            <person name="Bruce D."/>
            <person name="Goodwin L."/>
            <person name="Pitluck S."/>
            <person name="Kiss H."/>
            <person name="Brettin T."/>
            <person name="Detter J.C."/>
            <person name="Han C."/>
            <person name="Kuske C.R."/>
            <person name="Schmutz J."/>
            <person name="Larimer F."/>
            <person name="Land M."/>
            <person name="Hauser L."/>
            <person name="Kyrpides N."/>
            <person name="Lykidis A."/>
            <person name="Lovley D."/>
            <person name="Richardson P."/>
        </authorList>
    </citation>
    <scope>NUCLEOTIDE SEQUENCE [LARGE SCALE GENOMIC DNA]</scope>
    <source>
        <strain>ATCC BAA-1014 / DSM 16622 / JCM 12645 / Bem</strain>
    </source>
</reference>
<protein>
    <recommendedName>
        <fullName evidence="1">Adenylate kinase</fullName>
        <shortName evidence="1">AK</shortName>
        <ecNumber evidence="1">2.7.4.3</ecNumber>
    </recommendedName>
    <alternativeName>
        <fullName evidence="1">ATP-AMP transphosphorylase</fullName>
    </alternativeName>
    <alternativeName>
        <fullName evidence="1">ATP:AMP phosphotransferase</fullName>
    </alternativeName>
    <alternativeName>
        <fullName evidence="1">Adenylate monophosphate kinase</fullName>
    </alternativeName>
</protein>